<dbReference type="EMBL" id="CP001251">
    <property type="protein sequence ID" value="ACK42286.1"/>
    <property type="molecule type" value="Genomic_DNA"/>
</dbReference>
<dbReference type="RefSeq" id="WP_012583369.1">
    <property type="nucleotide sequence ID" value="NC_011661.1"/>
</dbReference>
<dbReference type="RefSeq" id="YP_002352900.1">
    <property type="nucleotide sequence ID" value="NC_011661.1"/>
</dbReference>
<dbReference type="SMR" id="B8E1F8"/>
<dbReference type="FunCoup" id="B8E1F8">
    <property type="interactions" value="380"/>
</dbReference>
<dbReference type="STRING" id="515635.Dtur_1006"/>
<dbReference type="EnsemblBacteria" id="ACK42286">
    <property type="protein sequence ID" value="ACK42286"/>
    <property type="gene ID" value="Dtur_1006"/>
</dbReference>
<dbReference type="KEGG" id="dtu:Dtur_1006"/>
<dbReference type="PATRIC" id="fig|515635.4.peg.1043"/>
<dbReference type="eggNOG" id="COG0100">
    <property type="taxonomic scope" value="Bacteria"/>
</dbReference>
<dbReference type="HOGENOM" id="CLU_072439_5_0_0"/>
<dbReference type="InParanoid" id="B8E1F8"/>
<dbReference type="OrthoDB" id="9806415at2"/>
<dbReference type="Proteomes" id="UP000007719">
    <property type="component" value="Chromosome"/>
</dbReference>
<dbReference type="GO" id="GO:0022627">
    <property type="term" value="C:cytosolic small ribosomal subunit"/>
    <property type="evidence" value="ECO:0000318"/>
    <property type="project" value="GO_Central"/>
</dbReference>
<dbReference type="GO" id="GO:0019843">
    <property type="term" value="F:rRNA binding"/>
    <property type="evidence" value="ECO:0007669"/>
    <property type="project" value="UniProtKB-UniRule"/>
</dbReference>
<dbReference type="GO" id="GO:0003735">
    <property type="term" value="F:structural constituent of ribosome"/>
    <property type="evidence" value="ECO:0000318"/>
    <property type="project" value="GO_Central"/>
</dbReference>
<dbReference type="GO" id="GO:0006412">
    <property type="term" value="P:translation"/>
    <property type="evidence" value="ECO:0000318"/>
    <property type="project" value="GO_Central"/>
</dbReference>
<dbReference type="FunFam" id="3.30.420.80:FF:000001">
    <property type="entry name" value="30S ribosomal protein S11"/>
    <property type="match status" value="1"/>
</dbReference>
<dbReference type="Gene3D" id="3.30.420.80">
    <property type="entry name" value="Ribosomal protein S11"/>
    <property type="match status" value="1"/>
</dbReference>
<dbReference type="HAMAP" id="MF_01310">
    <property type="entry name" value="Ribosomal_uS11"/>
    <property type="match status" value="1"/>
</dbReference>
<dbReference type="InterPro" id="IPR001971">
    <property type="entry name" value="Ribosomal_uS11"/>
</dbReference>
<dbReference type="InterPro" id="IPR019981">
    <property type="entry name" value="Ribosomal_uS11_bac-type"/>
</dbReference>
<dbReference type="InterPro" id="IPR018102">
    <property type="entry name" value="Ribosomal_uS11_CS"/>
</dbReference>
<dbReference type="InterPro" id="IPR036967">
    <property type="entry name" value="Ribosomal_uS11_sf"/>
</dbReference>
<dbReference type="NCBIfam" id="NF003698">
    <property type="entry name" value="PRK05309.1"/>
    <property type="match status" value="1"/>
</dbReference>
<dbReference type="NCBIfam" id="TIGR03632">
    <property type="entry name" value="uS11_bact"/>
    <property type="match status" value="1"/>
</dbReference>
<dbReference type="PANTHER" id="PTHR11759">
    <property type="entry name" value="40S RIBOSOMAL PROTEIN S14/30S RIBOSOMAL PROTEIN S11"/>
    <property type="match status" value="1"/>
</dbReference>
<dbReference type="Pfam" id="PF00411">
    <property type="entry name" value="Ribosomal_S11"/>
    <property type="match status" value="1"/>
</dbReference>
<dbReference type="PIRSF" id="PIRSF002131">
    <property type="entry name" value="Ribosomal_S11"/>
    <property type="match status" value="1"/>
</dbReference>
<dbReference type="SUPFAM" id="SSF53137">
    <property type="entry name" value="Translational machinery components"/>
    <property type="match status" value="1"/>
</dbReference>
<dbReference type="PROSITE" id="PS00054">
    <property type="entry name" value="RIBOSOMAL_S11"/>
    <property type="match status" value="1"/>
</dbReference>
<organism>
    <name type="scientific">Dictyoglomus turgidum (strain DSM 6724 / Z-1310)</name>
    <dbReference type="NCBI Taxonomy" id="515635"/>
    <lineage>
        <taxon>Bacteria</taxon>
        <taxon>Pseudomonadati</taxon>
        <taxon>Dictyoglomota</taxon>
        <taxon>Dictyoglomia</taxon>
        <taxon>Dictyoglomales</taxon>
        <taxon>Dictyoglomaceae</taxon>
        <taxon>Dictyoglomus</taxon>
    </lineage>
</organism>
<gene>
    <name evidence="1" type="primary">rpsK</name>
    <name type="ordered locus">Dtur_1006</name>
</gene>
<comment type="function">
    <text evidence="1">Located on the platform of the 30S subunit, it bridges several disparate RNA helices of the 16S rRNA. Forms part of the Shine-Dalgarno cleft in the 70S ribosome.</text>
</comment>
<comment type="subunit">
    <text evidence="1">Part of the 30S ribosomal subunit. Interacts with proteins S7 and S18. Binds to IF-3.</text>
</comment>
<comment type="similarity">
    <text evidence="1">Belongs to the universal ribosomal protein uS11 family.</text>
</comment>
<accession>B8E1F8</accession>
<name>RS11_DICTD</name>
<feature type="chain" id="PRO_1000141086" description="Small ribosomal subunit protein uS11">
    <location>
        <begin position="1"/>
        <end position="131"/>
    </location>
</feature>
<sequence length="131" mass="13982">MAKKKRTRGPKKEKRIVPVGVAHINSTFNNTIVTITDPEGNVLTWGSGGTAGFKGTKKGTPFAAQLAAEMAAKKAISEYGMKKVDVLVKGPGPGRETAIRALQAAGLEISLIKDVTPIPHNGCRPPRRRRV</sequence>
<proteinExistence type="inferred from homology"/>
<evidence type="ECO:0000255" key="1">
    <source>
        <dbReference type="HAMAP-Rule" id="MF_01310"/>
    </source>
</evidence>
<evidence type="ECO:0000305" key="2"/>
<protein>
    <recommendedName>
        <fullName evidence="1">Small ribosomal subunit protein uS11</fullName>
    </recommendedName>
    <alternativeName>
        <fullName evidence="2">30S ribosomal protein S11</fullName>
    </alternativeName>
</protein>
<keyword id="KW-1185">Reference proteome</keyword>
<keyword id="KW-0687">Ribonucleoprotein</keyword>
<keyword id="KW-0689">Ribosomal protein</keyword>
<keyword id="KW-0694">RNA-binding</keyword>
<keyword id="KW-0699">rRNA-binding</keyword>
<reference key="1">
    <citation type="journal article" date="2016" name="Front. Microbiol.">
        <title>The complete genome sequence of hyperthermophile Dictyoglomus turgidum DSM 6724 reveals a specialized carbohydrate fermentor.</title>
        <authorList>
            <person name="Brumm P.J."/>
            <person name="Gowda K."/>
            <person name="Robb F.T."/>
            <person name="Mead D.A."/>
        </authorList>
    </citation>
    <scope>NUCLEOTIDE SEQUENCE [LARGE SCALE GENOMIC DNA]</scope>
    <source>
        <strain>DSM 6724 / Z-1310</strain>
    </source>
</reference>